<gene>
    <name evidence="1" type="primary">tig</name>
    <name type="ordered locus">MMOB0850</name>
</gene>
<comment type="function">
    <text evidence="1">Involved in protein export. Acts as a chaperone by maintaining the newly synthesized protein in an open conformation. Functions as a peptidyl-prolyl cis-trans isomerase.</text>
</comment>
<comment type="catalytic activity">
    <reaction evidence="1">
        <text>[protein]-peptidylproline (omega=180) = [protein]-peptidylproline (omega=0)</text>
        <dbReference type="Rhea" id="RHEA:16237"/>
        <dbReference type="Rhea" id="RHEA-COMP:10747"/>
        <dbReference type="Rhea" id="RHEA-COMP:10748"/>
        <dbReference type="ChEBI" id="CHEBI:83833"/>
        <dbReference type="ChEBI" id="CHEBI:83834"/>
        <dbReference type="EC" id="5.2.1.8"/>
    </reaction>
</comment>
<comment type="subcellular location">
    <subcellularLocation>
        <location>Cytoplasm</location>
    </subcellularLocation>
    <text evidence="1">About half TF is bound to the ribosome near the polypeptide exit tunnel while the other half is free in the cytoplasm.</text>
</comment>
<comment type="domain">
    <text evidence="1">Consists of 3 domains; the N-terminus binds the ribosome, the middle domain has PPIase activity, while the C-terminus has intrinsic chaperone activity on its own.</text>
</comment>
<comment type="similarity">
    <text evidence="1">Belongs to the FKBP-type PPIase family. Tig subfamily.</text>
</comment>
<keyword id="KW-0131">Cell cycle</keyword>
<keyword id="KW-0132">Cell division</keyword>
<keyword id="KW-0143">Chaperone</keyword>
<keyword id="KW-0963">Cytoplasm</keyword>
<keyword id="KW-0413">Isomerase</keyword>
<keyword id="KW-1185">Reference proteome</keyword>
<keyword id="KW-0697">Rotamase</keyword>
<feature type="chain" id="PRO_0000179384" description="Trigger factor">
    <location>
        <begin position="1"/>
        <end position="483"/>
    </location>
</feature>
<feature type="domain" description="PPIase FKBP-type" evidence="1">
    <location>
        <begin position="166"/>
        <end position="251"/>
    </location>
</feature>
<feature type="region of interest" description="Disordered" evidence="2">
    <location>
        <begin position="435"/>
        <end position="483"/>
    </location>
</feature>
<feature type="compositionally biased region" description="Basic and acidic residues" evidence="2">
    <location>
        <begin position="435"/>
        <end position="460"/>
    </location>
</feature>
<feature type="compositionally biased region" description="Low complexity" evidence="2">
    <location>
        <begin position="467"/>
        <end position="483"/>
    </location>
</feature>
<sequence length="483" mass="55077">MTKTEINKKDWEINVVVSSEKKLWKAKQDLALSNLAKTLKIKGFRPGKASVEAAKKHLNPEQIQEEAVKLIANDLVKIASESIDESYIVLDSPIYEVEKMSDAELDLKFSYPIYPEFKIKNYKSLKVTLSRAKVSKEDVDSEIEKIREKNALLIKKTKDQGKVAKTDTVNIDYVGKIDGEEFDGGKASSHELVIGSKSFIDNFEDQLIGFKSGDKVEVKVSFPDDYHSSKFAGKKAIFDVKINDVFTKEKPVKNDDLVKFLNNPKLKTLAEMENYFKDLIKNEKDEKSKASFKKDIFEKIMNENEIPVPRLILMKETTNAIREFEKDVKKYGFTVEKYLKMLNMNSKDFVTNLNKESELKLKEALIYTEISKLEKIEAQPEDYDVKYKKFAKLYNVSLDSVKSMITQQQAQVAIVNEKILEFLIKHNAIEKNSVGEEPKLSTTKKVVEPTEEKTRKDSKMSTKKPAAKPAAKPAAATKKPVKK</sequence>
<evidence type="ECO:0000255" key="1">
    <source>
        <dbReference type="HAMAP-Rule" id="MF_00303"/>
    </source>
</evidence>
<evidence type="ECO:0000256" key="2">
    <source>
        <dbReference type="SAM" id="MobiDB-lite"/>
    </source>
</evidence>
<accession>Q6KIK5</accession>
<organism>
    <name type="scientific">Mycoplasma mobile (strain ATCC 43663 / 163K / NCTC 11711)</name>
    <name type="common">Mesomycoplasma mobile</name>
    <dbReference type="NCBI Taxonomy" id="267748"/>
    <lineage>
        <taxon>Bacteria</taxon>
        <taxon>Bacillati</taxon>
        <taxon>Mycoplasmatota</taxon>
        <taxon>Mycoplasmoidales</taxon>
        <taxon>Metamycoplasmataceae</taxon>
        <taxon>Mesomycoplasma</taxon>
    </lineage>
</organism>
<name>TIG_MYCM1</name>
<dbReference type="EC" id="5.2.1.8" evidence="1"/>
<dbReference type="EMBL" id="AE017308">
    <property type="protein sequence ID" value="AAT27571.1"/>
    <property type="molecule type" value="Genomic_DNA"/>
</dbReference>
<dbReference type="RefSeq" id="WP_011264605.1">
    <property type="nucleotide sequence ID" value="NC_006908.1"/>
</dbReference>
<dbReference type="SMR" id="Q6KIK5"/>
<dbReference type="STRING" id="267748.MMOB0850"/>
<dbReference type="KEGG" id="mmo:MMOB0850"/>
<dbReference type="eggNOG" id="COG0544">
    <property type="taxonomic scope" value="Bacteria"/>
</dbReference>
<dbReference type="HOGENOM" id="CLU_033058_3_2_14"/>
<dbReference type="OrthoDB" id="9767721at2"/>
<dbReference type="Proteomes" id="UP000009072">
    <property type="component" value="Chromosome"/>
</dbReference>
<dbReference type="GO" id="GO:0005737">
    <property type="term" value="C:cytoplasm"/>
    <property type="evidence" value="ECO:0007669"/>
    <property type="project" value="UniProtKB-SubCell"/>
</dbReference>
<dbReference type="GO" id="GO:0003755">
    <property type="term" value="F:peptidyl-prolyl cis-trans isomerase activity"/>
    <property type="evidence" value="ECO:0007669"/>
    <property type="project" value="UniProtKB-UniRule"/>
</dbReference>
<dbReference type="GO" id="GO:0051301">
    <property type="term" value="P:cell division"/>
    <property type="evidence" value="ECO:0007669"/>
    <property type="project" value="UniProtKB-KW"/>
</dbReference>
<dbReference type="GO" id="GO:0006457">
    <property type="term" value="P:protein folding"/>
    <property type="evidence" value="ECO:0007669"/>
    <property type="project" value="UniProtKB-UniRule"/>
</dbReference>
<dbReference type="GO" id="GO:0015031">
    <property type="term" value="P:protein transport"/>
    <property type="evidence" value="ECO:0007669"/>
    <property type="project" value="UniProtKB-UniRule"/>
</dbReference>
<dbReference type="FunFam" id="3.10.50.40:FF:000001">
    <property type="entry name" value="Trigger factor"/>
    <property type="match status" value="1"/>
</dbReference>
<dbReference type="Gene3D" id="3.10.50.40">
    <property type="match status" value="1"/>
</dbReference>
<dbReference type="Gene3D" id="3.30.70.1050">
    <property type="entry name" value="Trigger factor ribosome-binding domain"/>
    <property type="match status" value="1"/>
</dbReference>
<dbReference type="Gene3D" id="1.10.3120.10">
    <property type="entry name" value="Trigger factor, C-terminal domain"/>
    <property type="match status" value="1"/>
</dbReference>
<dbReference type="HAMAP" id="MF_00303">
    <property type="entry name" value="Trigger_factor_Tig"/>
    <property type="match status" value="1"/>
</dbReference>
<dbReference type="InterPro" id="IPR046357">
    <property type="entry name" value="PPIase_dom_sf"/>
</dbReference>
<dbReference type="InterPro" id="IPR001179">
    <property type="entry name" value="PPIase_FKBP_dom"/>
</dbReference>
<dbReference type="InterPro" id="IPR005215">
    <property type="entry name" value="Trig_fac"/>
</dbReference>
<dbReference type="InterPro" id="IPR008880">
    <property type="entry name" value="Trigger_fac_C"/>
</dbReference>
<dbReference type="InterPro" id="IPR037041">
    <property type="entry name" value="Trigger_fac_C_sf"/>
</dbReference>
<dbReference type="InterPro" id="IPR008881">
    <property type="entry name" value="Trigger_fac_ribosome-bd_bac"/>
</dbReference>
<dbReference type="InterPro" id="IPR036611">
    <property type="entry name" value="Trigger_fac_ribosome-bd_sf"/>
</dbReference>
<dbReference type="InterPro" id="IPR027304">
    <property type="entry name" value="Trigger_fact/SurA_dom_sf"/>
</dbReference>
<dbReference type="NCBIfam" id="TIGR00115">
    <property type="entry name" value="tig"/>
    <property type="match status" value="1"/>
</dbReference>
<dbReference type="Pfam" id="PF00254">
    <property type="entry name" value="FKBP_C"/>
    <property type="match status" value="1"/>
</dbReference>
<dbReference type="Pfam" id="PF05698">
    <property type="entry name" value="Trigger_C"/>
    <property type="match status" value="1"/>
</dbReference>
<dbReference type="Pfam" id="PF05697">
    <property type="entry name" value="Trigger_N"/>
    <property type="match status" value="1"/>
</dbReference>
<dbReference type="PIRSF" id="PIRSF003095">
    <property type="entry name" value="Trigger_factor"/>
    <property type="match status" value="1"/>
</dbReference>
<dbReference type="SUPFAM" id="SSF54534">
    <property type="entry name" value="FKBP-like"/>
    <property type="match status" value="1"/>
</dbReference>
<dbReference type="SUPFAM" id="SSF109998">
    <property type="entry name" value="Triger factor/SurA peptide-binding domain-like"/>
    <property type="match status" value="1"/>
</dbReference>
<dbReference type="SUPFAM" id="SSF102735">
    <property type="entry name" value="Trigger factor ribosome-binding domain"/>
    <property type="match status" value="1"/>
</dbReference>
<dbReference type="PROSITE" id="PS50059">
    <property type="entry name" value="FKBP_PPIASE"/>
    <property type="match status" value="1"/>
</dbReference>
<proteinExistence type="inferred from homology"/>
<reference key="1">
    <citation type="journal article" date="2004" name="Genome Res.">
        <title>The complete genome and proteome of Mycoplasma mobile.</title>
        <authorList>
            <person name="Jaffe J.D."/>
            <person name="Stange-Thomann N."/>
            <person name="Smith C."/>
            <person name="DeCaprio D."/>
            <person name="Fisher S."/>
            <person name="Butler J."/>
            <person name="Calvo S."/>
            <person name="Elkins T."/>
            <person name="FitzGerald M.G."/>
            <person name="Hafez N."/>
            <person name="Kodira C.D."/>
            <person name="Major J."/>
            <person name="Wang S."/>
            <person name="Wilkinson J."/>
            <person name="Nicol R."/>
            <person name="Nusbaum C."/>
            <person name="Birren B."/>
            <person name="Berg H.C."/>
            <person name="Church G.M."/>
        </authorList>
    </citation>
    <scope>NUCLEOTIDE SEQUENCE [LARGE SCALE GENOMIC DNA]</scope>
    <source>
        <strain>ATCC 43663 / NCTC 11711 / 163 K</strain>
    </source>
</reference>
<protein>
    <recommendedName>
        <fullName evidence="1">Trigger factor</fullName>
        <shortName evidence="1">TF</shortName>
        <ecNumber evidence="1">5.2.1.8</ecNumber>
    </recommendedName>
    <alternativeName>
        <fullName evidence="1">PPIase</fullName>
    </alternativeName>
</protein>